<organism>
    <name type="scientific">Polynucleobacter asymbioticus (strain DSM 18221 / CIP 109841 / QLW-P1DMWA-1)</name>
    <name type="common">Polynucleobacter necessarius subsp. asymbioticus</name>
    <dbReference type="NCBI Taxonomy" id="312153"/>
    <lineage>
        <taxon>Bacteria</taxon>
        <taxon>Pseudomonadati</taxon>
        <taxon>Pseudomonadota</taxon>
        <taxon>Betaproteobacteria</taxon>
        <taxon>Burkholderiales</taxon>
        <taxon>Burkholderiaceae</taxon>
        <taxon>Polynucleobacter</taxon>
    </lineage>
</organism>
<reference key="1">
    <citation type="journal article" date="2012" name="Stand. Genomic Sci.">
        <title>Complete genome sequence of Polynucleobacter necessarius subsp. asymbioticus type strain (QLW-P1DMWA-1(T)).</title>
        <authorList>
            <person name="Meincke L."/>
            <person name="Copeland A."/>
            <person name="Lapidus A."/>
            <person name="Lucas S."/>
            <person name="Berry K.W."/>
            <person name="Del Rio T.G."/>
            <person name="Hammon N."/>
            <person name="Dalin E."/>
            <person name="Tice H."/>
            <person name="Pitluck S."/>
            <person name="Richardson P."/>
            <person name="Bruce D."/>
            <person name="Goodwin L."/>
            <person name="Han C."/>
            <person name="Tapia R."/>
            <person name="Detter J.C."/>
            <person name="Schmutz J."/>
            <person name="Brettin T."/>
            <person name="Larimer F."/>
            <person name="Land M."/>
            <person name="Hauser L."/>
            <person name="Kyrpides N.C."/>
            <person name="Ivanova N."/>
            <person name="Goker M."/>
            <person name="Woyke T."/>
            <person name="Wu Q.L."/>
            <person name="Pockl M."/>
            <person name="Hahn M.W."/>
            <person name="Klenk H.P."/>
        </authorList>
    </citation>
    <scope>NUCLEOTIDE SEQUENCE [LARGE SCALE GENOMIC DNA]</scope>
    <source>
        <strain>DSM 18221 / CIP 109841 / QLW-P1DMWA-1</strain>
    </source>
</reference>
<dbReference type="EC" id="7.1.2.2" evidence="1"/>
<dbReference type="EMBL" id="CP000655">
    <property type="protein sequence ID" value="ABP33246.1"/>
    <property type="molecule type" value="Genomic_DNA"/>
</dbReference>
<dbReference type="RefSeq" id="WP_011901872.1">
    <property type="nucleotide sequence ID" value="NC_009379.1"/>
</dbReference>
<dbReference type="SMR" id="A4SUT2"/>
<dbReference type="GeneID" id="31480360"/>
<dbReference type="KEGG" id="pnu:Pnuc_0024"/>
<dbReference type="eggNOG" id="COG0056">
    <property type="taxonomic scope" value="Bacteria"/>
</dbReference>
<dbReference type="HOGENOM" id="CLU_010091_2_1_4"/>
<dbReference type="Proteomes" id="UP000000231">
    <property type="component" value="Chromosome"/>
</dbReference>
<dbReference type="GO" id="GO:0005886">
    <property type="term" value="C:plasma membrane"/>
    <property type="evidence" value="ECO:0007669"/>
    <property type="project" value="UniProtKB-SubCell"/>
</dbReference>
<dbReference type="GO" id="GO:0045259">
    <property type="term" value="C:proton-transporting ATP synthase complex"/>
    <property type="evidence" value="ECO:0007669"/>
    <property type="project" value="UniProtKB-KW"/>
</dbReference>
<dbReference type="GO" id="GO:0043531">
    <property type="term" value="F:ADP binding"/>
    <property type="evidence" value="ECO:0007669"/>
    <property type="project" value="TreeGrafter"/>
</dbReference>
<dbReference type="GO" id="GO:0005524">
    <property type="term" value="F:ATP binding"/>
    <property type="evidence" value="ECO:0007669"/>
    <property type="project" value="UniProtKB-UniRule"/>
</dbReference>
<dbReference type="GO" id="GO:0046933">
    <property type="term" value="F:proton-transporting ATP synthase activity, rotational mechanism"/>
    <property type="evidence" value="ECO:0007669"/>
    <property type="project" value="UniProtKB-UniRule"/>
</dbReference>
<dbReference type="CDD" id="cd18113">
    <property type="entry name" value="ATP-synt_F1_alpha_C"/>
    <property type="match status" value="1"/>
</dbReference>
<dbReference type="CDD" id="cd18116">
    <property type="entry name" value="ATP-synt_F1_alpha_N"/>
    <property type="match status" value="1"/>
</dbReference>
<dbReference type="CDD" id="cd01132">
    <property type="entry name" value="F1-ATPase_alpha_CD"/>
    <property type="match status" value="1"/>
</dbReference>
<dbReference type="FunFam" id="1.20.150.20:FF:000001">
    <property type="entry name" value="ATP synthase subunit alpha"/>
    <property type="match status" value="1"/>
</dbReference>
<dbReference type="FunFam" id="2.40.30.20:FF:000001">
    <property type="entry name" value="ATP synthase subunit alpha"/>
    <property type="match status" value="1"/>
</dbReference>
<dbReference type="FunFam" id="3.40.50.300:FF:000002">
    <property type="entry name" value="ATP synthase subunit alpha"/>
    <property type="match status" value="1"/>
</dbReference>
<dbReference type="Gene3D" id="2.40.30.20">
    <property type="match status" value="1"/>
</dbReference>
<dbReference type="Gene3D" id="1.20.150.20">
    <property type="entry name" value="ATP synthase alpha/beta chain, C-terminal domain"/>
    <property type="match status" value="1"/>
</dbReference>
<dbReference type="Gene3D" id="3.40.50.300">
    <property type="entry name" value="P-loop containing nucleotide triphosphate hydrolases"/>
    <property type="match status" value="1"/>
</dbReference>
<dbReference type="HAMAP" id="MF_01346">
    <property type="entry name" value="ATP_synth_alpha_bact"/>
    <property type="match status" value="1"/>
</dbReference>
<dbReference type="InterPro" id="IPR023366">
    <property type="entry name" value="ATP_synth_asu-like_sf"/>
</dbReference>
<dbReference type="InterPro" id="IPR000793">
    <property type="entry name" value="ATP_synth_asu_C"/>
</dbReference>
<dbReference type="InterPro" id="IPR038376">
    <property type="entry name" value="ATP_synth_asu_C_sf"/>
</dbReference>
<dbReference type="InterPro" id="IPR033732">
    <property type="entry name" value="ATP_synth_F1_a_nt-bd_dom"/>
</dbReference>
<dbReference type="InterPro" id="IPR005294">
    <property type="entry name" value="ATP_synth_F1_asu"/>
</dbReference>
<dbReference type="InterPro" id="IPR020003">
    <property type="entry name" value="ATPase_a/bsu_AS"/>
</dbReference>
<dbReference type="InterPro" id="IPR004100">
    <property type="entry name" value="ATPase_F1/V1/A1_a/bsu_N"/>
</dbReference>
<dbReference type="InterPro" id="IPR036121">
    <property type="entry name" value="ATPase_F1/V1/A1_a/bsu_N_sf"/>
</dbReference>
<dbReference type="InterPro" id="IPR000194">
    <property type="entry name" value="ATPase_F1/V1/A1_a/bsu_nucl-bd"/>
</dbReference>
<dbReference type="InterPro" id="IPR027417">
    <property type="entry name" value="P-loop_NTPase"/>
</dbReference>
<dbReference type="NCBIfam" id="TIGR00962">
    <property type="entry name" value="atpA"/>
    <property type="match status" value="1"/>
</dbReference>
<dbReference type="NCBIfam" id="NF009884">
    <property type="entry name" value="PRK13343.1"/>
    <property type="match status" value="1"/>
</dbReference>
<dbReference type="PANTHER" id="PTHR48082">
    <property type="entry name" value="ATP SYNTHASE SUBUNIT ALPHA, MITOCHONDRIAL"/>
    <property type="match status" value="1"/>
</dbReference>
<dbReference type="PANTHER" id="PTHR48082:SF2">
    <property type="entry name" value="ATP SYNTHASE SUBUNIT ALPHA, MITOCHONDRIAL"/>
    <property type="match status" value="1"/>
</dbReference>
<dbReference type="Pfam" id="PF00006">
    <property type="entry name" value="ATP-synt_ab"/>
    <property type="match status" value="1"/>
</dbReference>
<dbReference type="Pfam" id="PF00306">
    <property type="entry name" value="ATP-synt_ab_C"/>
    <property type="match status" value="1"/>
</dbReference>
<dbReference type="Pfam" id="PF02874">
    <property type="entry name" value="ATP-synt_ab_N"/>
    <property type="match status" value="1"/>
</dbReference>
<dbReference type="PIRSF" id="PIRSF039088">
    <property type="entry name" value="F_ATPase_subunit_alpha"/>
    <property type="match status" value="1"/>
</dbReference>
<dbReference type="SUPFAM" id="SSF47917">
    <property type="entry name" value="C-terminal domain of alpha and beta subunits of F1 ATP synthase"/>
    <property type="match status" value="1"/>
</dbReference>
<dbReference type="SUPFAM" id="SSF50615">
    <property type="entry name" value="N-terminal domain of alpha and beta subunits of F1 ATP synthase"/>
    <property type="match status" value="1"/>
</dbReference>
<dbReference type="SUPFAM" id="SSF52540">
    <property type="entry name" value="P-loop containing nucleoside triphosphate hydrolases"/>
    <property type="match status" value="1"/>
</dbReference>
<dbReference type="PROSITE" id="PS00152">
    <property type="entry name" value="ATPASE_ALPHA_BETA"/>
    <property type="match status" value="1"/>
</dbReference>
<keyword id="KW-0066">ATP synthesis</keyword>
<keyword id="KW-0067">ATP-binding</keyword>
<keyword id="KW-1003">Cell membrane</keyword>
<keyword id="KW-0139">CF(1)</keyword>
<keyword id="KW-0375">Hydrogen ion transport</keyword>
<keyword id="KW-0406">Ion transport</keyword>
<keyword id="KW-0472">Membrane</keyword>
<keyword id="KW-0547">Nucleotide-binding</keyword>
<keyword id="KW-1185">Reference proteome</keyword>
<keyword id="KW-1278">Translocase</keyword>
<keyword id="KW-0813">Transport</keyword>
<accession>A4SUT2</accession>
<gene>
    <name evidence="1" type="primary">atpA</name>
    <name type="ordered locus">Pnuc_0024</name>
</gene>
<evidence type="ECO:0000255" key="1">
    <source>
        <dbReference type="HAMAP-Rule" id="MF_01346"/>
    </source>
</evidence>
<protein>
    <recommendedName>
        <fullName evidence="1">ATP synthase subunit alpha</fullName>
        <ecNumber evidence="1">7.1.2.2</ecNumber>
    </recommendedName>
    <alternativeName>
        <fullName evidence="1">ATP synthase F1 sector subunit alpha</fullName>
    </alternativeName>
    <alternativeName>
        <fullName evidence="1">F-ATPase subunit alpha</fullName>
    </alternativeName>
</protein>
<sequence length="513" mass="55583">MQLNPSEISELIKSRISEMGVDSQVRNEGTVISVTDGICRVHGLSGVMQGEMLEFPNNTIGLALNLERDSVGAVVLGEYTHIKEGDPVKCTGRILEVPVGPELLGRVVNALGQPIDGKGPINTKLTDFIEKVAPGVIARQSVSQPVQTGLKAIDAMVPIGRGQRELIIGDRQTGKTAVAVDAIINQKGKGVYCVYVAIGQKASTIANVVRKLTELGAMEYTVVVAASASESAAMQYLSAYAGCTMGEYFRDRGEDALIVYDDLTKQAVAYRQISLLLRRPPGREAYPGDVFYLHSRLLERAARVNAEYVEKFTNGAVKGKTGSLTALPIIETQAGDVSAFVPTNVISITDGQIFLETDLFNAGVRPAINAGISVSRVGGAAQTKVIKKLSGGIRTDLAQYRELAAFAQFASDLDEATRKQLERGRRVTELCKQAQYKPLQVWEMAASLYAVNNGYFDDLEVKNVLAFEKGLQDHLKSKYADLVARIEETKDLSKDDEAALRAAIEDYKRSASF</sequence>
<feature type="chain" id="PRO_1000086886" description="ATP synthase subunit alpha">
    <location>
        <begin position="1"/>
        <end position="513"/>
    </location>
</feature>
<feature type="binding site" evidence="1">
    <location>
        <begin position="169"/>
        <end position="176"/>
    </location>
    <ligand>
        <name>ATP</name>
        <dbReference type="ChEBI" id="CHEBI:30616"/>
    </ligand>
</feature>
<feature type="site" description="Required for activity" evidence="1">
    <location>
        <position position="373"/>
    </location>
</feature>
<comment type="function">
    <text evidence="1">Produces ATP from ADP in the presence of a proton gradient across the membrane. The alpha chain is a regulatory subunit.</text>
</comment>
<comment type="catalytic activity">
    <reaction evidence="1">
        <text>ATP + H2O + 4 H(+)(in) = ADP + phosphate + 5 H(+)(out)</text>
        <dbReference type="Rhea" id="RHEA:57720"/>
        <dbReference type="ChEBI" id="CHEBI:15377"/>
        <dbReference type="ChEBI" id="CHEBI:15378"/>
        <dbReference type="ChEBI" id="CHEBI:30616"/>
        <dbReference type="ChEBI" id="CHEBI:43474"/>
        <dbReference type="ChEBI" id="CHEBI:456216"/>
        <dbReference type="EC" id="7.1.2.2"/>
    </reaction>
</comment>
<comment type="subunit">
    <text evidence="1">F-type ATPases have 2 components, CF(1) - the catalytic core - and CF(0) - the membrane proton channel. CF(1) has five subunits: alpha(3), beta(3), gamma(1), delta(1), epsilon(1). CF(0) has three main subunits: a(1), b(2) and c(9-12). The alpha and beta chains form an alternating ring which encloses part of the gamma chain. CF(1) is attached to CF(0) by a central stalk formed by the gamma and epsilon chains, while a peripheral stalk is formed by the delta and b chains.</text>
</comment>
<comment type="subcellular location">
    <subcellularLocation>
        <location evidence="1">Cell membrane</location>
        <topology evidence="1">Peripheral membrane protein</topology>
    </subcellularLocation>
</comment>
<comment type="similarity">
    <text evidence="1">Belongs to the ATPase alpha/beta chains family.</text>
</comment>
<name>ATPA_POLAQ</name>
<proteinExistence type="inferred from homology"/>